<name>RL32_NEUCR</name>
<sequence length="131" mass="14965">MVAAKKHVPIVKKRSKGFMRHQSDRFMRVDSAWRKPKGIDNRVRRRFRGTLAMPSIGYGSNKKTRHMMPSGHKAFLVSNVKDVELLLMHNKTYAAEIAHNVSSRKRIEIIARAKQLSVKVTNAKAKVTTEV</sequence>
<organism>
    <name type="scientific">Neurospora crassa (strain ATCC 24698 / 74-OR23-1A / CBS 708.71 / DSM 1257 / FGSC 987)</name>
    <dbReference type="NCBI Taxonomy" id="367110"/>
    <lineage>
        <taxon>Eukaryota</taxon>
        <taxon>Fungi</taxon>
        <taxon>Dikarya</taxon>
        <taxon>Ascomycota</taxon>
        <taxon>Pezizomycotina</taxon>
        <taxon>Sordariomycetes</taxon>
        <taxon>Sordariomycetidae</taxon>
        <taxon>Sordariales</taxon>
        <taxon>Sordariaceae</taxon>
        <taxon>Neurospora</taxon>
    </lineage>
</organism>
<comment type="function">
    <text evidence="4">Component of the ribosome, a large ribonucleoprotein complex responsible for the synthesis of proteins in the cell. The small ribosomal subunit (SSU) binds messenger RNAs (mRNAs) and translates the encoded message by selecting cognate aminoacyl-transfer RNA (tRNA) molecules. The large subunit (LSU) contains the ribosomal catalytic site termed the peptidyl transferase center (PTC), which catalyzes the formation of peptide bonds, thereby polymerizing the amino acids delivered by tRNAs into a polypeptide chain. The nascent polypeptides leave the ribosome through a tunnel in the LSU and interact with protein factors that function in enzymatic processing, targeting, and the membrane insertion of nascent chains at the exit of the ribosomal tunnel.</text>
</comment>
<comment type="subunit">
    <text evidence="1">Component of the large ribosomal subunit (LSU). Mature N.crassa ribosomes consist of a small (40S) and a large (60S) subunit. The 40S small subunit contains 1 molecule of ribosomal RNA (18S rRNA) and at least 32 different proteins. The large 60S subunit contains 3 rRNA molecules (26S, 5.8S and 5S rRNA) and at least 42 different proteins.</text>
</comment>
<comment type="subcellular location">
    <subcellularLocation>
        <location evidence="1">Cytoplasm</location>
    </subcellularLocation>
</comment>
<comment type="similarity">
    <text evidence="3">Belongs to the eukaryotic ribosomal protein eL32 family.</text>
</comment>
<evidence type="ECO:0000269" key="1">
    <source>
    </source>
</evidence>
<evidence type="ECO:0000303" key="2">
    <source>
    </source>
</evidence>
<evidence type="ECO:0000305" key="3"/>
<evidence type="ECO:0000305" key="4">
    <source>
    </source>
</evidence>
<evidence type="ECO:0007744" key="5">
    <source>
        <dbReference type="PDB" id="7R81"/>
    </source>
</evidence>
<dbReference type="EMBL" id="CM002238">
    <property type="protein sequence ID" value="EAA27547.3"/>
    <property type="molecule type" value="Genomic_DNA"/>
</dbReference>
<dbReference type="RefSeq" id="XP_956783.3">
    <property type="nucleotide sequence ID" value="XM_951690.3"/>
</dbReference>
<dbReference type="PDB" id="7R81">
    <property type="method" value="EM"/>
    <property type="resolution" value="2.70 A"/>
    <property type="chains" value="g1=1-131"/>
</dbReference>
<dbReference type="PDBsum" id="7R81"/>
<dbReference type="EMDB" id="EMD-24307"/>
<dbReference type="SMR" id="Q7RXY1"/>
<dbReference type="FunCoup" id="Q7RXY1">
    <property type="interactions" value="952"/>
</dbReference>
<dbReference type="STRING" id="367110.Q7RXY1"/>
<dbReference type="EnsemblFungi" id="EAA27547">
    <property type="protein sequence ID" value="EAA27547"/>
    <property type="gene ID" value="NCU00464"/>
</dbReference>
<dbReference type="GeneID" id="3872930"/>
<dbReference type="KEGG" id="ncr:NCU00464"/>
<dbReference type="VEuPathDB" id="FungiDB:NCU00464"/>
<dbReference type="HOGENOM" id="CLU_1768601_0_0_1"/>
<dbReference type="InParanoid" id="Q7RXY1"/>
<dbReference type="OrthoDB" id="268693at2759"/>
<dbReference type="Proteomes" id="UP000001805">
    <property type="component" value="Chromosome 3, Linkage Group III"/>
</dbReference>
<dbReference type="GO" id="GO:0022625">
    <property type="term" value="C:cytosolic large ribosomal subunit"/>
    <property type="evidence" value="ECO:0000318"/>
    <property type="project" value="GO_Central"/>
</dbReference>
<dbReference type="GO" id="GO:0003735">
    <property type="term" value="F:structural constituent of ribosome"/>
    <property type="evidence" value="ECO:0007669"/>
    <property type="project" value="InterPro"/>
</dbReference>
<dbReference type="GO" id="GO:0006412">
    <property type="term" value="P:translation"/>
    <property type="evidence" value="ECO:0007669"/>
    <property type="project" value="InterPro"/>
</dbReference>
<dbReference type="CDD" id="cd00513">
    <property type="entry name" value="Ribosomal_L32_L32e"/>
    <property type="match status" value="1"/>
</dbReference>
<dbReference type="InterPro" id="IPR001515">
    <property type="entry name" value="Ribosomal_eL32"/>
</dbReference>
<dbReference type="InterPro" id="IPR018263">
    <property type="entry name" value="Ribosomal_eL32_CS"/>
</dbReference>
<dbReference type="InterPro" id="IPR036351">
    <property type="entry name" value="Ribosomal_eL32_sf"/>
</dbReference>
<dbReference type="PANTHER" id="PTHR23413">
    <property type="entry name" value="60S RIBOSOMAL PROTEIN L32 AND DNA-DIRECTED RNA POLYMERASE II, SUBUNIT N"/>
    <property type="match status" value="1"/>
</dbReference>
<dbReference type="PANTHER" id="PTHR23413:SF1">
    <property type="entry name" value="RIBOSOMAL PROTEIN L32"/>
    <property type="match status" value="1"/>
</dbReference>
<dbReference type="Pfam" id="PF01655">
    <property type="entry name" value="Ribosomal_L32e"/>
    <property type="match status" value="1"/>
</dbReference>
<dbReference type="SMART" id="SM01393">
    <property type="entry name" value="Ribosomal_L32e"/>
    <property type="match status" value="1"/>
</dbReference>
<dbReference type="SUPFAM" id="SSF52042">
    <property type="entry name" value="Ribosomal protein L32e"/>
    <property type="match status" value="1"/>
</dbReference>
<dbReference type="PROSITE" id="PS00580">
    <property type="entry name" value="RIBOSOMAL_L32E"/>
    <property type="match status" value="1"/>
</dbReference>
<accession>Q7RXY1</accession>
<protein>
    <recommendedName>
        <fullName evidence="2">Large ribosomal subunit protein eL32</fullName>
    </recommendedName>
    <alternativeName>
        <fullName>60S ribosomal protein L32</fullName>
    </alternativeName>
    <alternativeName>
        <fullName>Cytoplasmic ribosomal protein-63</fullName>
    </alternativeName>
</protein>
<gene>
    <name type="primary">crp-63</name>
    <name type="synonym">rpl32</name>
    <name type="ORF">NCU00464</name>
</gene>
<keyword id="KW-0002">3D-structure</keyword>
<keyword id="KW-0963">Cytoplasm</keyword>
<keyword id="KW-1185">Reference proteome</keyword>
<keyword id="KW-0687">Ribonucleoprotein</keyword>
<keyword id="KW-0689">Ribosomal protein</keyword>
<proteinExistence type="evidence at protein level"/>
<reference key="1">
    <citation type="journal article" date="2003" name="Nature">
        <title>The genome sequence of the filamentous fungus Neurospora crassa.</title>
        <authorList>
            <person name="Galagan J.E."/>
            <person name="Calvo S.E."/>
            <person name="Borkovich K.A."/>
            <person name="Selker E.U."/>
            <person name="Read N.D."/>
            <person name="Jaffe D.B."/>
            <person name="FitzHugh W."/>
            <person name="Ma L.-J."/>
            <person name="Smirnov S."/>
            <person name="Purcell S."/>
            <person name="Rehman B."/>
            <person name="Elkins T."/>
            <person name="Engels R."/>
            <person name="Wang S."/>
            <person name="Nielsen C.B."/>
            <person name="Butler J."/>
            <person name="Endrizzi M."/>
            <person name="Qui D."/>
            <person name="Ianakiev P."/>
            <person name="Bell-Pedersen D."/>
            <person name="Nelson M.A."/>
            <person name="Werner-Washburne M."/>
            <person name="Selitrennikoff C.P."/>
            <person name="Kinsey J.A."/>
            <person name="Braun E.L."/>
            <person name="Zelter A."/>
            <person name="Schulte U."/>
            <person name="Kothe G.O."/>
            <person name="Jedd G."/>
            <person name="Mewes H.-W."/>
            <person name="Staben C."/>
            <person name="Marcotte E."/>
            <person name="Greenberg D."/>
            <person name="Roy A."/>
            <person name="Foley K."/>
            <person name="Naylor J."/>
            <person name="Stange-Thomann N."/>
            <person name="Barrett R."/>
            <person name="Gnerre S."/>
            <person name="Kamal M."/>
            <person name="Kamvysselis M."/>
            <person name="Mauceli E.W."/>
            <person name="Bielke C."/>
            <person name="Rudd S."/>
            <person name="Frishman D."/>
            <person name="Krystofova S."/>
            <person name="Rasmussen C."/>
            <person name="Metzenberg R.L."/>
            <person name="Perkins D.D."/>
            <person name="Kroken S."/>
            <person name="Cogoni C."/>
            <person name="Macino G."/>
            <person name="Catcheside D.E.A."/>
            <person name="Li W."/>
            <person name="Pratt R.J."/>
            <person name="Osmani S.A."/>
            <person name="DeSouza C.P.C."/>
            <person name="Glass N.L."/>
            <person name="Orbach M.J."/>
            <person name="Berglund J.A."/>
            <person name="Voelker R."/>
            <person name="Yarden O."/>
            <person name="Plamann M."/>
            <person name="Seiler S."/>
            <person name="Dunlap J.C."/>
            <person name="Radford A."/>
            <person name="Aramayo R."/>
            <person name="Natvig D.O."/>
            <person name="Alex L.A."/>
            <person name="Mannhaupt G."/>
            <person name="Ebbole D.J."/>
            <person name="Freitag M."/>
            <person name="Paulsen I."/>
            <person name="Sachs M.S."/>
            <person name="Lander E.S."/>
            <person name="Nusbaum C."/>
            <person name="Birren B.W."/>
        </authorList>
    </citation>
    <scope>NUCLEOTIDE SEQUENCE [LARGE SCALE GENOMIC DNA]</scope>
    <source>
        <strain>ATCC 24698 / 74-OR23-1A / CBS 708.71 / DSM 1257 / FGSC 987</strain>
    </source>
</reference>
<reference evidence="5" key="2">
    <citation type="journal article" date="2021" name="Proc. Natl. Acad. Sci. U.S.A.">
        <title>Structure of the translating Neurospora ribosome arrested by cycloheximide.</title>
        <authorList>
            <person name="Shen L."/>
            <person name="Su Z."/>
            <person name="Yang K."/>
            <person name="Wu C."/>
            <person name="Becker T."/>
            <person name="Bell-Pedersen D."/>
            <person name="Zhang J."/>
            <person name="Sachs M.S."/>
        </authorList>
    </citation>
    <scope>STRUCTURE BY ELECTRON MICROSCOPY (2.70 ANGSTROMS)</scope>
</reference>
<feature type="chain" id="PRO_0000131142" description="Large ribosomal subunit protein eL32">
    <location>
        <begin position="1"/>
        <end position="131"/>
    </location>
</feature>